<accession>Q6J8G1</accession>
<accession>O36612</accession>
<organismHost>
    <name type="scientific">Bandicota bengalensis</name>
    <name type="common">lesser bandicoot rat</name>
    <dbReference type="NCBI Taxonomy" id="69079"/>
</organismHost>
<organismHost>
    <name type="scientific">Callithrix</name>
    <dbReference type="NCBI Taxonomy" id="9481"/>
</organismHost>
<organismHost>
    <name type="scientific">Cercopithecus hamlyni</name>
    <name type="common">Owl-faced monkey</name>
    <name type="synonym">Hamlyn's monkey</name>
    <dbReference type="NCBI Taxonomy" id="9536"/>
</organismHost>
<organismHost>
    <name type="scientific">Chlorocebus aethiops</name>
    <name type="common">Green monkey</name>
    <name type="synonym">Cercopithecus aethiops</name>
    <dbReference type="NCBI Taxonomy" id="9534"/>
</organismHost>
<organismHost>
    <name type="scientific">Homo sapiens</name>
    <name type="common">Human</name>
    <dbReference type="NCBI Taxonomy" id="9606"/>
</organismHost>
<organismHost>
    <name type="scientific">Macaca</name>
    <name type="common">macaques</name>
    <dbReference type="NCBI Taxonomy" id="9539"/>
</organismHost>
<organismHost>
    <name type="scientific">Mus musculus</name>
    <name type="common">Mouse</name>
    <dbReference type="NCBI Taxonomy" id="10090"/>
</organismHost>
<organismHost>
    <name type="scientific">Pan troglodytes</name>
    <name type="common">Chimpanzee</name>
    <dbReference type="NCBI Taxonomy" id="9598"/>
</organismHost>
<organismHost>
    <name type="scientific">Saimiri</name>
    <name type="common">squirrel monkeys</name>
    <dbReference type="NCBI Taxonomy" id="9520"/>
</organismHost>
<organismHost>
    <name type="scientific">Sus scrofa</name>
    <name type="common">Pig</name>
    <dbReference type="NCBI Taxonomy" id="9823"/>
</organismHost>
<comment type="function">
    <text evidence="2">Small multifunctional phosphoprotein involved in virion morphogenesis, egress and counteracting host innate immunity. Plays critical roles in the final steps of viral release by interacting with host TSG101, a member of the vacuolar protein-sorting pathway and using other cellular host proteins involved in vesicle formation pathway. Also acts as a viroporin and forms ion conductive pores allowing viral particle release. Impairs the generation of type I interferon by down-regulating host TLR3 and TLR7 as well as their downstream signaling pathways. Down-regulates the phosphorylation of host IRF3 via the interaction with host SIRP-alpha, thereby inhibiting IFN-I expression. Interacts with host microtubules.</text>
</comment>
<comment type="subunit">
    <text evidence="2">Forms homooligomers (By similarity). Interacts with host SRC, HCK, FYN, PIK3R3 and GRB2 (via SH3 domain); binding does not activate the kinases (By similarity). Interacts with host AMBP/bikunin and AMBP/alpha-1-microglobulin peptides (By similarity). Interacts with host HPX/hemopexin. Interacts (when phosphorylated) with capsid protein ORF2 (By similarity). Interacts with host TSG101; this interaction plays a role in viral release from the host cell (By similarity). Interacts with host SIRPA; this interaction down-regulates the phosphorylation of host IRF3 (By similarity).</text>
</comment>
<comment type="subcellular location">
    <subcellularLocation>
        <location evidence="2">Host endoplasmic reticulum membrane</location>
        <topology evidence="2">Lipid-anchor</topology>
    </subcellularLocation>
    <subcellularLocation>
        <location evidence="2">Host cytoplasm</location>
        <location evidence="2">Host cytoskeleton</location>
    </subcellularLocation>
    <subcellularLocation>
        <location evidence="2">Virion</location>
    </subcellularLocation>
    <subcellularLocation>
        <location evidence="2">Host cell membrane</location>
        <topology evidence="2">Lipid-anchor</topology>
    </subcellularLocation>
    <text evidence="2">The N-terminal region seems to associate with the cytoskeleton probably via one of its hydrophobic regions. Present on the surface of the membrane-wrapped virions.</text>
</comment>
<comment type="domain">
    <text evidence="2">The PSAP motif is necessary for the release of membrane-wrapped virions from infected cells.</text>
</comment>
<comment type="PTM">
    <text evidence="2">Palmitoylated in the N-terminus.</text>
</comment>
<comment type="miscellaneous">
    <text evidence="2">The viral particles present in feces and bile are non-enveloped, while those in circulating blood and culture supernatants are covered with a cellular membrane (quasi-enveloped).</text>
</comment>
<comment type="similarity">
    <text evidence="4">Belongs to the hepevirus ORF3 protein family.</text>
</comment>
<comment type="sequence caution" evidence="4">
    <conflict type="erroneous initiation">
        <sequence resource="EMBL-CDS" id="AAC97209"/>
    </conflict>
</comment>
<comment type="sequence caution" evidence="4">
    <conflict type="erroneous initiation">
        <sequence resource="EMBL-CDS" id="AAT40996"/>
    </conflict>
</comment>
<comment type="sequence caution" evidence="4">
    <conflict type="erroneous initiation">
        <sequence resource="EMBL-CDS" id="AAT40999"/>
    </conflict>
</comment>
<comment type="sequence caution" evidence="4">
    <conflict type="erroneous initiation">
        <sequence resource="EMBL-CDS" id="AAT41002"/>
    </conflict>
</comment>
<name>ORF3_HEVMG</name>
<organism>
    <name type="scientific">Hepatitis E virus genotype 3 (isolate Swine/United States/swUS1)</name>
    <name type="common">HEV-3</name>
    <name type="synonym">Hepatitis E virus genotype 3 (isolate Swine/United States/Meng)</name>
    <dbReference type="NCBI Taxonomy" id="512345"/>
    <lineage>
        <taxon>Viruses</taxon>
        <taxon>Riboviria</taxon>
        <taxon>Orthornavirae</taxon>
        <taxon>Kitrinoviricota</taxon>
        <taxon>Alsuviricetes</taxon>
        <taxon>Hepelivirales</taxon>
        <taxon>Hepeviridae</taxon>
        <taxon>Orthohepevirinae</taxon>
        <taxon>Paslahepevirus</taxon>
        <taxon>Hepatitis E virus</taxon>
    </lineage>
</organism>
<sequence>MGSPCALGLFCCCSSCFCLCCPRHRPASRLAAVVGGATAVPAVVSGVTGLILSPSPSPIFIQPTPSLPMSFHNPGLELALDSRPAPLAPLGVTSPSAPPLPPVVDLPQLGLRR</sequence>
<protein>
    <recommendedName>
        <fullName>Protein ORF3</fullName>
        <shortName>pORF3</shortName>
    </recommendedName>
</protein>
<gene>
    <name type="ORF">ORF3</name>
</gene>
<dbReference type="EMBL" id="AF082843">
    <property type="protein sequence ID" value="AAC97209.1"/>
    <property type="status" value="ALT_INIT"/>
    <property type="molecule type" value="Genomic_RNA"/>
</dbReference>
<dbReference type="EMBL" id="AY575857">
    <property type="protein sequence ID" value="AAT40996.1"/>
    <property type="status" value="ALT_INIT"/>
    <property type="molecule type" value="Genomic_RNA"/>
</dbReference>
<dbReference type="EMBL" id="AY575858">
    <property type="protein sequence ID" value="AAT40999.1"/>
    <property type="status" value="ALT_INIT"/>
    <property type="molecule type" value="Genomic_RNA"/>
</dbReference>
<dbReference type="EMBL" id="AY575859">
    <property type="protein sequence ID" value="AAT41002.1"/>
    <property type="status" value="ALT_INIT"/>
    <property type="molecule type" value="Genomic_RNA"/>
</dbReference>
<dbReference type="Proteomes" id="UP000001028">
    <property type="component" value="Segment"/>
</dbReference>
<dbReference type="Proteomes" id="UP000008858">
    <property type="component" value="Genome"/>
</dbReference>
<dbReference type="Proteomes" id="UP000008859">
    <property type="component" value="Genome"/>
</dbReference>
<dbReference type="Proteomes" id="UP000008989">
    <property type="component" value="Genome"/>
</dbReference>
<dbReference type="GO" id="GO:0044167">
    <property type="term" value="C:host cell endoplasmic reticulum membrane"/>
    <property type="evidence" value="ECO:0007669"/>
    <property type="project" value="UniProtKB-SubCell"/>
</dbReference>
<dbReference type="GO" id="GO:0020002">
    <property type="term" value="C:host cell plasma membrane"/>
    <property type="evidence" value="ECO:0007669"/>
    <property type="project" value="UniProtKB-SubCell"/>
</dbReference>
<dbReference type="GO" id="GO:0044163">
    <property type="term" value="C:host cytoskeleton"/>
    <property type="evidence" value="ECO:0007669"/>
    <property type="project" value="UniProtKB-SubCell"/>
</dbReference>
<dbReference type="GO" id="GO:0016020">
    <property type="term" value="C:membrane"/>
    <property type="evidence" value="ECO:0007669"/>
    <property type="project" value="UniProtKB-KW"/>
</dbReference>
<dbReference type="GO" id="GO:0044423">
    <property type="term" value="C:virion component"/>
    <property type="evidence" value="ECO:0007669"/>
    <property type="project" value="UniProtKB-KW"/>
</dbReference>
<dbReference type="InterPro" id="IPR003384">
    <property type="entry name" value="HEV_Orf2"/>
</dbReference>
<dbReference type="Pfam" id="PF02444">
    <property type="entry name" value="HEV_ORF1"/>
    <property type="match status" value="1"/>
</dbReference>
<reference key="1">
    <citation type="journal article" date="1997" name="Proc. Natl. Acad. Sci. U.S.A.">
        <title>A novel virus in swine is closely related to the human hepatitis E virus.</title>
        <authorList>
            <person name="Meng X.J."/>
            <person name="Purcell R.H."/>
            <person name="Halbur P.G."/>
            <person name="Lehman J.R."/>
            <person name="Webb D.M."/>
            <person name="Tsareva T.S."/>
            <person name="Haynes J.S."/>
            <person name="Thacker B.J."/>
            <person name="Emerson S.U."/>
        </authorList>
    </citation>
    <scope>NUCLEOTIDE SEQUENCE [GENOMIC RNA]</scope>
</reference>
<reference key="2">
    <citation type="journal article" date="1998" name="J. Virol.">
        <title>Genetic and experimental evidence for cross-species infection by swine hepatitis E virus.</title>
        <authorList>
            <person name="Meng X.J."/>
            <person name="Halbur P.G."/>
            <person name="Shapiro M.S."/>
            <person name="Govindarajan S."/>
            <person name="Bruna J.D."/>
            <person name="Mushahwar I.K."/>
            <person name="Purcell R.H."/>
            <person name="Emerson S.U."/>
        </authorList>
    </citation>
    <scope>NUCLEOTIDE SEQUENCE [GENOMIC RNA]</scope>
</reference>
<reference key="3">
    <citation type="journal article" date="2005" name="J. Virol.">
        <title>Capped RNA transcripts of full-length cDNA clones of swine hepatitis E virus are replication competent when transfected into Huh7 cells and infectious when intrahepatically inoculated into pigs.</title>
        <authorList>
            <person name="Huang Y.W."/>
            <person name="Haqshenas G."/>
            <person name="Kasorndorkbua C."/>
            <person name="Halbur P.G."/>
            <person name="Emerson S.U."/>
            <person name="Meng X.J."/>
        </authorList>
    </citation>
    <scope>NUCLEOTIDE SEQUENCE [GENOMIC RNA]</scope>
    <source>
        <strain>Isolate pSHEV-1</strain>
        <strain>Isolate pSHEV-2</strain>
        <strain>Isolate pSHEV-3</strain>
    </source>
</reference>
<reference key="4">
    <citation type="journal article" date="2007" name="J. Virol.">
        <title>Initiation at the third in-frame AUG codon of open reading frame 3 of the hepatitis E virus is essential for viral infectivity in vivo.</title>
        <authorList>
            <person name="Huang Y.W."/>
            <person name="Opriessnig T."/>
            <person name="Halbur P.G."/>
            <person name="Meng X.J."/>
        </authorList>
    </citation>
    <scope>IDENTIFICATION OF START CODON</scope>
</reference>
<keyword id="KW-1032">Host cell membrane</keyword>
<keyword id="KW-1035">Host cytoplasm</keyword>
<keyword id="KW-1037">Host cytoskeleton</keyword>
<keyword id="KW-1038">Host endoplasmic reticulum</keyword>
<keyword id="KW-1043">Host membrane</keyword>
<keyword id="KW-0945">Host-virus interaction</keyword>
<keyword id="KW-0449">Lipoprotein</keyword>
<keyword id="KW-0472">Membrane</keyword>
<keyword id="KW-0597">Phosphoprotein</keyword>
<keyword id="KW-0946">Virion</keyword>
<feature type="chain" id="PRO_5000055032" description="Protein ORF3">
    <location>
        <begin position="1"/>
        <end position="113"/>
    </location>
</feature>
<feature type="region of interest" description="Hydrophobic">
    <location>
        <begin position="1"/>
        <end position="21"/>
    </location>
</feature>
<feature type="region of interest" description="Interaction with host HPX" evidence="1">
    <location>
        <begin position="27"/>
        <end position="67"/>
    </location>
</feature>
<feature type="region of interest" description="Hydrophobic">
    <location>
        <begin position="32"/>
        <end position="52"/>
    </location>
</feature>
<feature type="region of interest" description="Interaction with the capsid protein" evidence="1">
    <location>
        <begin position="47"/>
        <end position="71"/>
    </location>
</feature>
<feature type="region of interest" description="Homodimerization, and interaction with host AMBP/bikunin" evidence="1">
    <location>
        <begin position="71"/>
        <end position="113"/>
    </location>
</feature>
<feature type="region of interest" description="Disordered" evidence="3">
    <location>
        <begin position="89"/>
        <end position="113"/>
    </location>
</feature>
<feature type="region of interest" description="Interaction with host SRC, HCK, FYN, PIK3R3 and GRB2" evidence="1">
    <location>
        <begin position="94"/>
        <end position="103"/>
    </location>
</feature>
<feature type="short sequence motif" description="PTAP/PSAP motif" evidence="2">
    <location>
        <begin position="95"/>
        <end position="98"/>
    </location>
</feature>
<feature type="modified residue" description="Phosphoserine; by host" evidence="1">
    <location>
        <position position="70"/>
    </location>
</feature>
<feature type="sequence conflict" description="In Ref. 1 and 2; AAC97209." evidence="4" ref="1 2">
    <original>L</original>
    <variation>F</variation>
    <location>
        <position position="78"/>
    </location>
</feature>
<proteinExistence type="inferred from homology"/>
<evidence type="ECO:0000250" key="1"/>
<evidence type="ECO:0000250" key="2">
    <source>
        <dbReference type="UniProtKB" id="Q81870"/>
    </source>
</evidence>
<evidence type="ECO:0000256" key="3">
    <source>
        <dbReference type="SAM" id="MobiDB-lite"/>
    </source>
</evidence>
<evidence type="ECO:0000305" key="4"/>